<evidence type="ECO:0000256" key="1">
    <source>
        <dbReference type="SAM" id="MobiDB-lite"/>
    </source>
</evidence>
<evidence type="ECO:0000269" key="2">
    <source>
    </source>
</evidence>
<evidence type="ECO:0000305" key="3"/>
<dbReference type="EC" id="3.2.2.28"/>
<dbReference type="EMBL" id="AJ277958">
    <property type="protein sequence ID" value="CAB93678.1"/>
    <property type="molecule type" value="Genomic_DNA"/>
</dbReference>
<dbReference type="EMBL" id="AF288481">
    <property type="protein sequence ID" value="AAG01021.1"/>
    <property type="molecule type" value="Genomic_DNA"/>
</dbReference>
<dbReference type="EMBL" id="CU329672">
    <property type="protein sequence ID" value="CAA19065.1"/>
    <property type="molecule type" value="Genomic_DNA"/>
</dbReference>
<dbReference type="PIR" id="T41658">
    <property type="entry name" value="T41658"/>
</dbReference>
<dbReference type="RefSeq" id="NP_588515.1">
    <property type="nucleotide sequence ID" value="NM_001023504.2"/>
</dbReference>
<dbReference type="SMR" id="O59825"/>
<dbReference type="BioGRID" id="275995">
    <property type="interactions" value="5"/>
</dbReference>
<dbReference type="FunCoup" id="O59825">
    <property type="interactions" value="23"/>
</dbReference>
<dbReference type="STRING" id="284812.O59825"/>
<dbReference type="iPTMnet" id="O59825"/>
<dbReference type="PaxDb" id="4896-SPCC965.05c.1"/>
<dbReference type="EnsemblFungi" id="SPCC965.05c.1">
    <property type="protein sequence ID" value="SPCC965.05c.1:pep"/>
    <property type="gene ID" value="SPCC965.05c"/>
</dbReference>
<dbReference type="GeneID" id="2539432"/>
<dbReference type="KEGG" id="spo:2539432"/>
<dbReference type="PomBase" id="SPCC965.05c">
    <property type="gene designation" value="thp1"/>
</dbReference>
<dbReference type="VEuPathDB" id="FungiDB:SPCC965.05c"/>
<dbReference type="eggNOG" id="KOG4120">
    <property type="taxonomic scope" value="Eukaryota"/>
</dbReference>
<dbReference type="HOGENOM" id="CLU_042829_1_0_1"/>
<dbReference type="InParanoid" id="O59825"/>
<dbReference type="OMA" id="DYICENP"/>
<dbReference type="PhylomeDB" id="O59825"/>
<dbReference type="BRENDA" id="3.2.2.27">
    <property type="organism ID" value="5613"/>
</dbReference>
<dbReference type="Reactome" id="R-SPO-110329">
    <property type="pathway name" value="Cleavage of the damaged pyrimidine"/>
</dbReference>
<dbReference type="Reactome" id="R-SPO-3108214">
    <property type="pathway name" value="SUMOylation of DNA damage response and repair proteins"/>
</dbReference>
<dbReference type="Reactome" id="R-SPO-5221030">
    <property type="pathway name" value="TET1,2,3 and TDG demethylate DNA"/>
</dbReference>
<dbReference type="PRO" id="PR:O59825"/>
<dbReference type="Proteomes" id="UP000002485">
    <property type="component" value="Chromosome III"/>
</dbReference>
<dbReference type="GO" id="GO:0005634">
    <property type="term" value="C:nucleus"/>
    <property type="evidence" value="ECO:0007005"/>
    <property type="project" value="PomBase"/>
</dbReference>
<dbReference type="GO" id="GO:0097507">
    <property type="term" value="F:hypoxanthine DNA N-glycosylase activity"/>
    <property type="evidence" value="ECO:0000314"/>
    <property type="project" value="PomBase"/>
</dbReference>
<dbReference type="GO" id="GO:0097509">
    <property type="term" value="F:oxanine DNA N-glycosylase activity"/>
    <property type="evidence" value="ECO:0000314"/>
    <property type="project" value="PomBase"/>
</dbReference>
<dbReference type="GO" id="GO:0008263">
    <property type="term" value="F:pyrimidine-specific mismatch base pair DNA N-glycosylase activity"/>
    <property type="evidence" value="ECO:0000318"/>
    <property type="project" value="GO_Central"/>
</dbReference>
<dbReference type="GO" id="GO:0004844">
    <property type="term" value="F:uracil DNA N-glycosylase activity"/>
    <property type="evidence" value="ECO:0000314"/>
    <property type="project" value="PomBase"/>
</dbReference>
<dbReference type="GO" id="GO:0097508">
    <property type="term" value="F:xanthine DNA N-glycosylase activity"/>
    <property type="evidence" value="ECO:0000314"/>
    <property type="project" value="PomBase"/>
</dbReference>
<dbReference type="GO" id="GO:0006285">
    <property type="term" value="P:base-excision repair, AP site formation"/>
    <property type="evidence" value="ECO:0000318"/>
    <property type="project" value="GO_Central"/>
</dbReference>
<dbReference type="CDD" id="cd10028">
    <property type="entry name" value="UDG-F2_TDG_MUG"/>
    <property type="match status" value="1"/>
</dbReference>
<dbReference type="Gene3D" id="3.40.470.10">
    <property type="entry name" value="Uracil-DNA glycosylase-like domain"/>
    <property type="match status" value="1"/>
</dbReference>
<dbReference type="InterPro" id="IPR015637">
    <property type="entry name" value="MUG/TDG"/>
</dbReference>
<dbReference type="InterPro" id="IPR003310">
    <property type="entry name" value="TDG-like_euk"/>
</dbReference>
<dbReference type="InterPro" id="IPR005122">
    <property type="entry name" value="Uracil-DNA_glycosylase-like"/>
</dbReference>
<dbReference type="InterPro" id="IPR036895">
    <property type="entry name" value="Uracil-DNA_glycosylase-like_sf"/>
</dbReference>
<dbReference type="NCBIfam" id="TIGR00584">
    <property type="entry name" value="mug"/>
    <property type="match status" value="1"/>
</dbReference>
<dbReference type="PANTHER" id="PTHR12159">
    <property type="entry name" value="G/T AND G/U MISMATCH-SPECIFIC DNA GLYCOSYLASE"/>
    <property type="match status" value="1"/>
</dbReference>
<dbReference type="PANTHER" id="PTHR12159:SF9">
    <property type="entry name" value="G_T MISMATCH-SPECIFIC THYMINE DNA GLYCOSYLASE"/>
    <property type="match status" value="1"/>
</dbReference>
<dbReference type="Pfam" id="PF03167">
    <property type="entry name" value="UDG"/>
    <property type="match status" value="1"/>
</dbReference>
<dbReference type="SUPFAM" id="SSF52141">
    <property type="entry name" value="Uracil-DNA glycosylase-like"/>
    <property type="match status" value="1"/>
</dbReference>
<gene>
    <name type="primary">thp1</name>
    <name type="ORF">SPCC965.05c</name>
</gene>
<sequence length="325" mass="36574">MNDIETRDTGTKNDNSSEFNLSVKSHKRKRSFDDENLELEESREETSGGILKKAKTQSFSESLERFRFAHAGSNNEYRKTDVVKNSDTDNGLLKSAVETITLENGLRNRRVNVTKKSTLKASVKKSTLKKKNEVDPALLQGVPDYICENPYAIIVGLNPGITSSLKGHAFASPSNRFWKMLNKSKLLEGNAEFTYLNDKDLPAHGLGITNLCARPSSSGADLRKEEMQDGARILYEKVKRYRPQVGLFISGKGIWEEMYKMLTGKKLPKTFVFGWQPEKFGDANVFVGISSSGRAAGYSDEKKQNLWNLFAEEVNRHREIVKHAV</sequence>
<proteinExistence type="inferred from homology"/>
<comment type="function">
    <text evidence="2">Removes uracil from G/U mispairs in ssDNA. Also corrects G/G mispairs. Does not catalyze the removal of thymine from G/T mispairs.</text>
</comment>
<comment type="catalytic activity">
    <reaction>
        <text>Specifically hydrolyzes mismatched double-stranded DNA and polynucleotides, releasing free uracil.</text>
        <dbReference type="EC" id="3.2.2.28"/>
    </reaction>
</comment>
<comment type="subcellular location">
    <subcellularLocation>
        <location evidence="3">Nucleus</location>
    </subcellularLocation>
</comment>
<comment type="similarity">
    <text evidence="3">Belongs to the uracil-DNA glycosylase (UDG) superfamily. TDG/mug family.</text>
</comment>
<name>TDG_SCHPO</name>
<feature type="chain" id="PRO_0000185779" description="G/U mismatch-specific uracil DNA glycosylase">
    <location>
        <begin position="1"/>
        <end position="325"/>
    </location>
</feature>
<feature type="region of interest" description="Disordered" evidence="1">
    <location>
        <begin position="1"/>
        <end position="50"/>
    </location>
</feature>
<feature type="compositionally biased region" description="Basic and acidic residues" evidence="1">
    <location>
        <begin position="1"/>
        <end position="11"/>
    </location>
</feature>
<feature type="compositionally biased region" description="Polar residues" evidence="1">
    <location>
        <begin position="12"/>
        <end position="23"/>
    </location>
</feature>
<feature type="compositionally biased region" description="Acidic residues" evidence="1">
    <location>
        <begin position="34"/>
        <end position="43"/>
    </location>
</feature>
<organism>
    <name type="scientific">Schizosaccharomyces pombe (strain 972 / ATCC 24843)</name>
    <name type="common">Fission yeast</name>
    <dbReference type="NCBI Taxonomy" id="284812"/>
    <lineage>
        <taxon>Eukaryota</taxon>
        <taxon>Fungi</taxon>
        <taxon>Dikarya</taxon>
        <taxon>Ascomycota</taxon>
        <taxon>Taphrinomycotina</taxon>
        <taxon>Schizosaccharomycetes</taxon>
        <taxon>Schizosaccharomycetales</taxon>
        <taxon>Schizosaccharomycetaceae</taxon>
        <taxon>Schizosaccharomyces</taxon>
    </lineage>
</organism>
<accession>O59825</accession>
<keyword id="KW-0227">DNA damage</keyword>
<keyword id="KW-0234">DNA repair</keyword>
<keyword id="KW-0378">Hydrolase</keyword>
<keyword id="KW-0539">Nucleus</keyword>
<keyword id="KW-1185">Reference proteome</keyword>
<reference key="1">
    <citation type="journal article" date="2003" name="Nucleic Acids Res.">
        <title>The versatile thymine DNA-glycosylase: a comparative characterization of the human, Drosophila and fission yeast orthologs.</title>
        <authorList>
            <person name="Hardeland U."/>
            <person name="Bentele M."/>
            <person name="Jiricny J."/>
            <person name="Schaer P."/>
        </authorList>
    </citation>
    <scope>NUCLEOTIDE SEQUENCE [GENOMIC DNA]</scope>
    <scope>FUNCTION</scope>
    <source>
        <strain>972 / ATCC 24843</strain>
    </source>
</reference>
<reference key="2">
    <citation type="submission" date="2000-07" db="EMBL/GenBank/DDBJ databases">
        <title>An ortholog of thymine mismatch repair enzyme gene in Schizosaccharomyces pombe.</title>
        <authorList>
            <person name="Zhu X."/>
            <person name="Zhao Y."/>
        </authorList>
    </citation>
    <scope>NUCLEOTIDE SEQUENCE [GENOMIC DNA]</scope>
</reference>
<reference key="3">
    <citation type="journal article" date="2002" name="Nature">
        <title>The genome sequence of Schizosaccharomyces pombe.</title>
        <authorList>
            <person name="Wood V."/>
            <person name="Gwilliam R."/>
            <person name="Rajandream M.A."/>
            <person name="Lyne M.H."/>
            <person name="Lyne R."/>
            <person name="Stewart A."/>
            <person name="Sgouros J.G."/>
            <person name="Peat N."/>
            <person name="Hayles J."/>
            <person name="Baker S.G."/>
            <person name="Basham D."/>
            <person name="Bowman S."/>
            <person name="Brooks K."/>
            <person name="Brown D."/>
            <person name="Brown S."/>
            <person name="Chillingworth T."/>
            <person name="Churcher C.M."/>
            <person name="Collins M."/>
            <person name="Connor R."/>
            <person name="Cronin A."/>
            <person name="Davis P."/>
            <person name="Feltwell T."/>
            <person name="Fraser A."/>
            <person name="Gentles S."/>
            <person name="Goble A."/>
            <person name="Hamlin N."/>
            <person name="Harris D.E."/>
            <person name="Hidalgo J."/>
            <person name="Hodgson G."/>
            <person name="Holroyd S."/>
            <person name="Hornsby T."/>
            <person name="Howarth S."/>
            <person name="Huckle E.J."/>
            <person name="Hunt S."/>
            <person name="Jagels K."/>
            <person name="James K.D."/>
            <person name="Jones L."/>
            <person name="Jones M."/>
            <person name="Leather S."/>
            <person name="McDonald S."/>
            <person name="McLean J."/>
            <person name="Mooney P."/>
            <person name="Moule S."/>
            <person name="Mungall K.L."/>
            <person name="Murphy L.D."/>
            <person name="Niblett D."/>
            <person name="Odell C."/>
            <person name="Oliver K."/>
            <person name="O'Neil S."/>
            <person name="Pearson D."/>
            <person name="Quail M.A."/>
            <person name="Rabbinowitsch E."/>
            <person name="Rutherford K.M."/>
            <person name="Rutter S."/>
            <person name="Saunders D."/>
            <person name="Seeger K."/>
            <person name="Sharp S."/>
            <person name="Skelton J."/>
            <person name="Simmonds M.N."/>
            <person name="Squares R."/>
            <person name="Squares S."/>
            <person name="Stevens K."/>
            <person name="Taylor K."/>
            <person name="Taylor R.G."/>
            <person name="Tivey A."/>
            <person name="Walsh S.V."/>
            <person name="Warren T."/>
            <person name="Whitehead S."/>
            <person name="Woodward J.R."/>
            <person name="Volckaert G."/>
            <person name="Aert R."/>
            <person name="Robben J."/>
            <person name="Grymonprez B."/>
            <person name="Weltjens I."/>
            <person name="Vanstreels E."/>
            <person name="Rieger M."/>
            <person name="Schaefer M."/>
            <person name="Mueller-Auer S."/>
            <person name="Gabel C."/>
            <person name="Fuchs M."/>
            <person name="Duesterhoeft A."/>
            <person name="Fritzc C."/>
            <person name="Holzer E."/>
            <person name="Moestl D."/>
            <person name="Hilbert H."/>
            <person name="Borzym K."/>
            <person name="Langer I."/>
            <person name="Beck A."/>
            <person name="Lehrach H."/>
            <person name="Reinhardt R."/>
            <person name="Pohl T.M."/>
            <person name="Eger P."/>
            <person name="Zimmermann W."/>
            <person name="Wedler H."/>
            <person name="Wambutt R."/>
            <person name="Purnelle B."/>
            <person name="Goffeau A."/>
            <person name="Cadieu E."/>
            <person name="Dreano S."/>
            <person name="Gloux S."/>
            <person name="Lelaure V."/>
            <person name="Mottier S."/>
            <person name="Galibert F."/>
            <person name="Aves S.J."/>
            <person name="Xiang Z."/>
            <person name="Hunt C."/>
            <person name="Moore K."/>
            <person name="Hurst S.M."/>
            <person name="Lucas M."/>
            <person name="Rochet M."/>
            <person name="Gaillardin C."/>
            <person name="Tallada V.A."/>
            <person name="Garzon A."/>
            <person name="Thode G."/>
            <person name="Daga R.R."/>
            <person name="Cruzado L."/>
            <person name="Jimenez J."/>
            <person name="Sanchez M."/>
            <person name="del Rey F."/>
            <person name="Benito J."/>
            <person name="Dominguez A."/>
            <person name="Revuelta J.L."/>
            <person name="Moreno S."/>
            <person name="Armstrong J."/>
            <person name="Forsburg S.L."/>
            <person name="Cerutti L."/>
            <person name="Lowe T."/>
            <person name="McCombie W.R."/>
            <person name="Paulsen I."/>
            <person name="Potashkin J."/>
            <person name="Shpakovski G.V."/>
            <person name="Ussery D."/>
            <person name="Barrell B.G."/>
            <person name="Nurse P."/>
        </authorList>
    </citation>
    <scope>NUCLEOTIDE SEQUENCE [LARGE SCALE GENOMIC DNA]</scope>
    <source>
        <strain>972 / ATCC 24843</strain>
    </source>
</reference>
<protein>
    <recommendedName>
        <fullName>G/U mismatch-specific uracil DNA glycosylase</fullName>
        <ecNumber>3.2.2.28</ecNumber>
    </recommendedName>
    <alternativeName>
        <fullName>Uracil mismatch repair protein</fullName>
    </alternativeName>
</protein>